<reference key="1">
    <citation type="journal article" date="2007" name="BMC Genomics">
        <title>The full-ORF clone resource of the German cDNA consortium.</title>
        <authorList>
            <person name="Bechtel S."/>
            <person name="Rosenfelder H."/>
            <person name="Duda A."/>
            <person name="Schmidt C.P."/>
            <person name="Ernst U."/>
            <person name="Wellenreuther R."/>
            <person name="Mehrle A."/>
            <person name="Schuster C."/>
            <person name="Bahr A."/>
            <person name="Bloecker H."/>
            <person name="Heubner D."/>
            <person name="Hoerlein A."/>
            <person name="Michel G."/>
            <person name="Wedler H."/>
            <person name="Koehrer K."/>
            <person name="Ottenwaelder B."/>
            <person name="Poustka A."/>
            <person name="Wiemann S."/>
            <person name="Schupp I."/>
        </authorList>
    </citation>
    <scope>NUCLEOTIDE SEQUENCE [LARGE SCALE MRNA] (ISOFORM 2)</scope>
    <source>
        <tissue>Rectum tumor</tissue>
    </source>
</reference>
<reference key="2">
    <citation type="journal article" date="2004" name="Nature">
        <title>The DNA sequence and comparative analysis of human chromosome 10.</title>
        <authorList>
            <person name="Deloukas P."/>
            <person name="Earthrowl M.E."/>
            <person name="Grafham D.V."/>
            <person name="Rubenfield M."/>
            <person name="French L."/>
            <person name="Steward C.A."/>
            <person name="Sims S.K."/>
            <person name="Jones M.C."/>
            <person name="Searle S."/>
            <person name="Scott C."/>
            <person name="Howe K."/>
            <person name="Hunt S.E."/>
            <person name="Andrews T.D."/>
            <person name="Gilbert J.G.R."/>
            <person name="Swarbreck D."/>
            <person name="Ashurst J.L."/>
            <person name="Taylor A."/>
            <person name="Battles J."/>
            <person name="Bird C.P."/>
            <person name="Ainscough R."/>
            <person name="Almeida J.P."/>
            <person name="Ashwell R.I.S."/>
            <person name="Ambrose K.D."/>
            <person name="Babbage A.K."/>
            <person name="Bagguley C.L."/>
            <person name="Bailey J."/>
            <person name="Banerjee R."/>
            <person name="Bates K."/>
            <person name="Beasley H."/>
            <person name="Bray-Allen S."/>
            <person name="Brown A.J."/>
            <person name="Brown J.Y."/>
            <person name="Burford D.C."/>
            <person name="Burrill W."/>
            <person name="Burton J."/>
            <person name="Cahill P."/>
            <person name="Camire D."/>
            <person name="Carter N.P."/>
            <person name="Chapman J.C."/>
            <person name="Clark S.Y."/>
            <person name="Clarke G."/>
            <person name="Clee C.M."/>
            <person name="Clegg S."/>
            <person name="Corby N."/>
            <person name="Coulson A."/>
            <person name="Dhami P."/>
            <person name="Dutta I."/>
            <person name="Dunn M."/>
            <person name="Faulkner L."/>
            <person name="Frankish A."/>
            <person name="Frankland J.A."/>
            <person name="Garner P."/>
            <person name="Garnett J."/>
            <person name="Gribble S."/>
            <person name="Griffiths C."/>
            <person name="Grocock R."/>
            <person name="Gustafson E."/>
            <person name="Hammond S."/>
            <person name="Harley J.L."/>
            <person name="Hart E."/>
            <person name="Heath P.D."/>
            <person name="Ho T.P."/>
            <person name="Hopkins B."/>
            <person name="Horne J."/>
            <person name="Howden P.J."/>
            <person name="Huckle E."/>
            <person name="Hynds C."/>
            <person name="Johnson C."/>
            <person name="Johnson D."/>
            <person name="Kana A."/>
            <person name="Kay M."/>
            <person name="Kimberley A.M."/>
            <person name="Kershaw J.K."/>
            <person name="Kokkinaki M."/>
            <person name="Laird G.K."/>
            <person name="Lawlor S."/>
            <person name="Lee H.M."/>
            <person name="Leongamornlert D.A."/>
            <person name="Laird G."/>
            <person name="Lloyd C."/>
            <person name="Lloyd D.M."/>
            <person name="Loveland J."/>
            <person name="Lovell J."/>
            <person name="McLaren S."/>
            <person name="McLay K.E."/>
            <person name="McMurray A."/>
            <person name="Mashreghi-Mohammadi M."/>
            <person name="Matthews L."/>
            <person name="Milne S."/>
            <person name="Nickerson T."/>
            <person name="Nguyen M."/>
            <person name="Overton-Larty E."/>
            <person name="Palmer S.A."/>
            <person name="Pearce A.V."/>
            <person name="Peck A.I."/>
            <person name="Pelan S."/>
            <person name="Phillimore B."/>
            <person name="Porter K."/>
            <person name="Rice C.M."/>
            <person name="Rogosin A."/>
            <person name="Ross M.T."/>
            <person name="Sarafidou T."/>
            <person name="Sehra H.K."/>
            <person name="Shownkeen R."/>
            <person name="Skuce C.D."/>
            <person name="Smith M."/>
            <person name="Standring L."/>
            <person name="Sycamore N."/>
            <person name="Tester J."/>
            <person name="Thorpe A."/>
            <person name="Torcasso W."/>
            <person name="Tracey A."/>
            <person name="Tromans A."/>
            <person name="Tsolas J."/>
            <person name="Wall M."/>
            <person name="Walsh J."/>
            <person name="Wang H."/>
            <person name="Weinstock K."/>
            <person name="West A.P."/>
            <person name="Willey D.L."/>
            <person name="Whitehead S.L."/>
            <person name="Wilming L."/>
            <person name="Wray P.W."/>
            <person name="Young L."/>
            <person name="Chen Y."/>
            <person name="Lovering R.C."/>
            <person name="Moschonas N.K."/>
            <person name="Siebert R."/>
            <person name="Fechtel K."/>
            <person name="Bentley D."/>
            <person name="Durbin R.M."/>
            <person name="Hubbard T."/>
            <person name="Doucette-Stamm L."/>
            <person name="Beck S."/>
            <person name="Smith D.R."/>
            <person name="Rogers J."/>
        </authorList>
    </citation>
    <scope>NUCLEOTIDE SEQUENCE [LARGE SCALE GENOMIC DNA]</scope>
</reference>
<reference key="3">
    <citation type="journal article" date="2004" name="Genome Res.">
        <title>The status, quality, and expansion of the NIH full-length cDNA project: the Mammalian Gene Collection (MGC).</title>
        <authorList>
            <consortium name="The MGC Project Team"/>
        </authorList>
    </citation>
    <scope>NUCLEOTIDE SEQUENCE [LARGE SCALE MRNA] (ISOFORM 1)</scope>
    <source>
        <tissue>Liver</tissue>
    </source>
</reference>
<reference key="4">
    <citation type="journal article" date="2012" name="N. Engl. J. Med.">
        <title>Diagnostic exome sequencing in persons with severe intellectual disability.</title>
        <authorList>
            <person name="de Ligt J."/>
            <person name="Willemsen M.H."/>
            <person name="van Bon B.W."/>
            <person name="Kleefstra T."/>
            <person name="Yntema H.G."/>
            <person name="Kroes T."/>
            <person name="Vulto-van Silfhout A.T."/>
            <person name="Koolen D.A."/>
            <person name="de Vries P."/>
            <person name="Gilissen C."/>
            <person name="del Rosario M."/>
            <person name="Hoischen A."/>
            <person name="Scheffer H."/>
            <person name="de Vries B.B."/>
            <person name="Brunner H.G."/>
            <person name="Veltman J.A."/>
            <person name="Vissers L.E."/>
        </authorList>
    </citation>
    <scope>VARIANT ASN-22</scope>
</reference>
<feature type="chain" id="PRO_0000274698" description="Clarin-3">
    <location>
        <begin position="1"/>
        <end position="226"/>
    </location>
</feature>
<feature type="transmembrane region" description="Helical" evidence="1">
    <location>
        <begin position="8"/>
        <end position="28"/>
    </location>
</feature>
<feature type="transmembrane region" description="Helical" evidence="1">
    <location>
        <begin position="92"/>
        <end position="112"/>
    </location>
</feature>
<feature type="transmembrane region" description="Helical" evidence="1">
    <location>
        <begin position="129"/>
        <end position="149"/>
    </location>
</feature>
<feature type="transmembrane region" description="Helical" evidence="1">
    <location>
        <begin position="181"/>
        <end position="201"/>
    </location>
</feature>
<feature type="glycosylation site" description="N-linked (GlcNAc...) asparagine" evidence="1">
    <location>
        <position position="83"/>
    </location>
</feature>
<feature type="splice variant" id="VSP_022871" description="In isoform 2." evidence="3">
    <location>
        <begin position="1"/>
        <end position="68"/>
    </location>
</feature>
<feature type="splice variant" id="VSP_022872" description="In isoform 2." evidence="3">
    <original>AEPKKKFA</original>
    <variation>MHSQNIVL</variation>
    <location>
        <begin position="69"/>
        <end position="76"/>
    </location>
</feature>
<feature type="sequence variant" id="VAR_069399" evidence="2">
    <original>I</original>
    <variation>N</variation>
    <location>
        <position position="22"/>
    </location>
</feature>
<feature type="sequence variant" id="VAR_053828" description="In dbSNP:rs35070529.">
    <original>F</original>
    <variation>I</variation>
    <location>
        <position position="75"/>
    </location>
</feature>
<name>CLRN3_HUMAN</name>
<keyword id="KW-0025">Alternative splicing</keyword>
<keyword id="KW-0325">Glycoprotein</keyword>
<keyword id="KW-0472">Membrane</keyword>
<keyword id="KW-1267">Proteomics identification</keyword>
<keyword id="KW-1185">Reference proteome</keyword>
<keyword id="KW-0812">Transmembrane</keyword>
<keyword id="KW-1133">Transmembrane helix</keyword>
<sequence>MPTTKKTLMFLSSFFTSLGSFIVICSILGTQAWITSTIAVRDSASNGSIFITYGLFRGESSEELSHGLAEPKKKFAVLEILNNSSQKTLHSVTILFLVLSLITSLLSSGFTFYNSISNPYQTFLGPTGVYTWNGLGASFVFVTMILFVANTQSNQLSEELFQMLYPATTSKGTTHSYGYSFWLILLVILLNIVTVTIIIFYQKARYQRKQEQRKPMEYAPRDGILF</sequence>
<organism>
    <name type="scientific">Homo sapiens</name>
    <name type="common">Human</name>
    <dbReference type="NCBI Taxonomy" id="9606"/>
    <lineage>
        <taxon>Eukaryota</taxon>
        <taxon>Metazoa</taxon>
        <taxon>Chordata</taxon>
        <taxon>Craniata</taxon>
        <taxon>Vertebrata</taxon>
        <taxon>Euteleostomi</taxon>
        <taxon>Mammalia</taxon>
        <taxon>Eutheria</taxon>
        <taxon>Euarchontoglires</taxon>
        <taxon>Primates</taxon>
        <taxon>Haplorrhini</taxon>
        <taxon>Catarrhini</taxon>
        <taxon>Hominidae</taxon>
        <taxon>Homo</taxon>
    </lineage>
</organism>
<evidence type="ECO:0000255" key="1"/>
<evidence type="ECO:0000269" key="2">
    <source>
    </source>
</evidence>
<evidence type="ECO:0000303" key="3">
    <source>
    </source>
</evidence>
<evidence type="ECO:0000305" key="4"/>
<protein>
    <recommendedName>
        <fullName>Clarin-3</fullName>
    </recommendedName>
    <alternativeName>
        <fullName>Transmembrane protein 12</fullName>
    </alternativeName>
    <alternativeName>
        <fullName>Usher syndrome type-3A-like protein 1</fullName>
    </alternativeName>
</protein>
<comment type="interaction">
    <interactant intactId="EBI-9091272">
        <id>Q8NCR9</id>
    </interactant>
    <interactant intactId="EBI-466029">
        <id>P42858</id>
        <label>HTT</label>
    </interactant>
    <organismsDiffer>false</organismsDiffer>
    <experiments>9</experiments>
</comment>
<comment type="interaction">
    <interactant intactId="EBI-9091272">
        <id>Q8NCR9</id>
    </interactant>
    <interactant intactId="EBI-2558379">
        <id>O60361</id>
        <label>NME2P1</label>
    </interactant>
    <organismsDiffer>false</organismsDiffer>
    <experiments>2</experiments>
</comment>
<comment type="subcellular location">
    <subcellularLocation>
        <location evidence="4">Membrane</location>
        <topology evidence="4">Multi-pass membrane protein</topology>
    </subcellularLocation>
</comment>
<comment type="alternative products">
    <event type="alternative splicing"/>
    <isoform>
        <id>Q8NCR9-1</id>
        <name>1</name>
        <sequence type="displayed"/>
    </isoform>
    <isoform>
        <id>Q8NCR9-2</id>
        <name>2</name>
        <sequence type="described" ref="VSP_022871 VSP_022872"/>
    </isoform>
</comment>
<comment type="similarity">
    <text evidence="4">Belongs to the clarin family.</text>
</comment>
<comment type="sequence caution" evidence="4">
    <conflict type="erroneous initiation">
        <sequence resource="EMBL-CDS" id="CAE45899"/>
    </conflict>
</comment>
<dbReference type="EMBL" id="BX640823">
    <property type="protein sequence ID" value="CAE45899.1"/>
    <property type="status" value="ALT_INIT"/>
    <property type="molecule type" value="mRNA"/>
</dbReference>
<dbReference type="EMBL" id="AL158166">
    <property type="status" value="NOT_ANNOTATED_CDS"/>
    <property type="molecule type" value="Genomic_DNA"/>
</dbReference>
<dbReference type="EMBL" id="BC029478">
    <property type="protein sequence ID" value="AAH29478.1"/>
    <property type="molecule type" value="mRNA"/>
</dbReference>
<dbReference type="CCDS" id="CCDS7656.1">
    <molecule id="Q8NCR9-1"/>
</dbReference>
<dbReference type="RefSeq" id="NP_689524.1">
    <molecule id="Q8NCR9-1"/>
    <property type="nucleotide sequence ID" value="NM_152311.5"/>
</dbReference>
<dbReference type="BioGRID" id="125642">
    <property type="interactions" value="12"/>
</dbReference>
<dbReference type="FunCoup" id="Q8NCR9">
    <property type="interactions" value="15"/>
</dbReference>
<dbReference type="IntAct" id="Q8NCR9">
    <property type="interactions" value="6"/>
</dbReference>
<dbReference type="STRING" id="9606.ENSP00000357660"/>
<dbReference type="TCDB" id="9.A.46.1.3">
    <property type="family name" value="the clarin (clrn) family"/>
</dbReference>
<dbReference type="GlyCosmos" id="Q8NCR9">
    <property type="glycosylation" value="1 site, No reported glycans"/>
</dbReference>
<dbReference type="GlyGen" id="Q8NCR9">
    <property type="glycosylation" value="1 site"/>
</dbReference>
<dbReference type="iPTMnet" id="Q8NCR9"/>
<dbReference type="PhosphoSitePlus" id="Q8NCR9"/>
<dbReference type="SwissPalm" id="Q8NCR9"/>
<dbReference type="BioMuta" id="CLRN3"/>
<dbReference type="DMDM" id="74751198"/>
<dbReference type="jPOST" id="Q8NCR9"/>
<dbReference type="MassIVE" id="Q8NCR9"/>
<dbReference type="PaxDb" id="9606-ENSP00000357660"/>
<dbReference type="PeptideAtlas" id="Q8NCR9"/>
<dbReference type="ProteomicsDB" id="72933">
    <molecule id="Q8NCR9-1"/>
</dbReference>
<dbReference type="ProteomicsDB" id="72934">
    <molecule id="Q8NCR9-2"/>
</dbReference>
<dbReference type="Antibodypedia" id="19247">
    <property type="antibodies" value="111 antibodies from 20 providers"/>
</dbReference>
<dbReference type="DNASU" id="119467"/>
<dbReference type="Ensembl" id="ENST00000368671.4">
    <molecule id="Q8NCR9-1"/>
    <property type="protein sequence ID" value="ENSP00000357660.3"/>
    <property type="gene ID" value="ENSG00000180745.5"/>
</dbReference>
<dbReference type="GeneID" id="119467"/>
<dbReference type="KEGG" id="hsa:119467"/>
<dbReference type="MANE-Select" id="ENST00000368671.4">
    <property type="protein sequence ID" value="ENSP00000357660.3"/>
    <property type="RefSeq nucleotide sequence ID" value="NM_152311.5"/>
    <property type="RefSeq protein sequence ID" value="NP_689524.1"/>
</dbReference>
<dbReference type="UCSC" id="uc001lka.2">
    <molecule id="Q8NCR9-1"/>
    <property type="organism name" value="human"/>
</dbReference>
<dbReference type="AGR" id="HGNC:20795"/>
<dbReference type="CTD" id="119467"/>
<dbReference type="DisGeNET" id="119467"/>
<dbReference type="GeneCards" id="CLRN3"/>
<dbReference type="HGNC" id="HGNC:20795">
    <property type="gene designation" value="CLRN3"/>
</dbReference>
<dbReference type="HPA" id="ENSG00000180745">
    <property type="expression patterns" value="Group enriched (intestine, kidney, liver)"/>
</dbReference>
<dbReference type="MIM" id="620256">
    <property type="type" value="gene"/>
</dbReference>
<dbReference type="neXtProt" id="NX_Q8NCR9"/>
<dbReference type="OpenTargets" id="ENSG00000180745"/>
<dbReference type="PharmGKB" id="PA162382510"/>
<dbReference type="VEuPathDB" id="HostDB:ENSG00000180745"/>
<dbReference type="eggNOG" id="ENOG502S2S8">
    <property type="taxonomic scope" value="Eukaryota"/>
</dbReference>
<dbReference type="GeneTree" id="ENSGT00850000132319"/>
<dbReference type="HOGENOM" id="CLU_1224445_0_0_1"/>
<dbReference type="InParanoid" id="Q8NCR9"/>
<dbReference type="OMA" id="IIIVFYQ"/>
<dbReference type="OrthoDB" id="9450082at2759"/>
<dbReference type="PAN-GO" id="Q8NCR9">
    <property type="GO annotations" value="0 GO annotations based on evolutionary models"/>
</dbReference>
<dbReference type="PhylomeDB" id="Q8NCR9"/>
<dbReference type="TreeFam" id="TF331875"/>
<dbReference type="PathwayCommons" id="Q8NCR9"/>
<dbReference type="SignaLink" id="Q8NCR9"/>
<dbReference type="BioGRID-ORCS" id="119467">
    <property type="hits" value="10 hits in 1141 CRISPR screens"/>
</dbReference>
<dbReference type="GenomeRNAi" id="119467"/>
<dbReference type="Pharos" id="Q8NCR9">
    <property type="development level" value="Tdark"/>
</dbReference>
<dbReference type="PRO" id="PR:Q8NCR9"/>
<dbReference type="Proteomes" id="UP000005640">
    <property type="component" value="Chromosome 10"/>
</dbReference>
<dbReference type="RNAct" id="Q8NCR9">
    <property type="molecule type" value="protein"/>
</dbReference>
<dbReference type="Bgee" id="ENSG00000180745">
    <property type="expression patterns" value="Expressed in ileal mucosa and 70 other cell types or tissues"/>
</dbReference>
<dbReference type="GO" id="GO:0070062">
    <property type="term" value="C:extracellular exosome"/>
    <property type="evidence" value="ECO:0007005"/>
    <property type="project" value="UniProtKB"/>
</dbReference>
<dbReference type="GO" id="GO:0016020">
    <property type="term" value="C:membrane"/>
    <property type="evidence" value="ECO:0007669"/>
    <property type="project" value="UniProtKB-SubCell"/>
</dbReference>
<dbReference type="GO" id="GO:0007605">
    <property type="term" value="P:sensory perception of sound"/>
    <property type="evidence" value="ECO:0007669"/>
    <property type="project" value="UniProtKB-ARBA"/>
</dbReference>
<dbReference type="FunFam" id="1.20.140.150:FF:000043">
    <property type="entry name" value="Clarin 3"/>
    <property type="match status" value="1"/>
</dbReference>
<dbReference type="Gene3D" id="1.20.140.150">
    <property type="match status" value="1"/>
</dbReference>
<dbReference type="InterPro" id="IPR026748">
    <property type="entry name" value="Clarin"/>
</dbReference>
<dbReference type="PANTHER" id="PTHR31548">
    <property type="entry name" value="CLARIN"/>
    <property type="match status" value="1"/>
</dbReference>
<dbReference type="PANTHER" id="PTHR31548:SF3">
    <property type="entry name" value="CLARIN-3"/>
    <property type="match status" value="1"/>
</dbReference>
<accession>Q8NCR9</accession>
<accession>Q6MZX8</accession>
<gene>
    <name type="primary">CLRN3</name>
    <name type="synonym">TMEM12</name>
    <name type="synonym">USH3AL1</name>
</gene>
<proteinExistence type="evidence at protein level"/>